<protein>
    <recommendedName>
        <fullName evidence="1">Iron-sulfur cluster insertion protein ErpA</fullName>
    </recommendedName>
</protein>
<accession>Q0VSN8</accession>
<organism>
    <name type="scientific">Alcanivorax borkumensis (strain ATCC 700651 / DSM 11573 / NCIMB 13689 / SK2)</name>
    <dbReference type="NCBI Taxonomy" id="393595"/>
    <lineage>
        <taxon>Bacteria</taxon>
        <taxon>Pseudomonadati</taxon>
        <taxon>Pseudomonadota</taxon>
        <taxon>Gammaproteobacteria</taxon>
        <taxon>Oceanospirillales</taxon>
        <taxon>Alcanivoracaceae</taxon>
        <taxon>Alcanivorax</taxon>
    </lineage>
</organism>
<proteinExistence type="inferred from homology"/>
<keyword id="KW-0408">Iron</keyword>
<keyword id="KW-0411">Iron-sulfur</keyword>
<keyword id="KW-0479">Metal-binding</keyword>
<keyword id="KW-1185">Reference proteome</keyword>
<dbReference type="EMBL" id="AM286690">
    <property type="protein sequence ID" value="CAL15810.1"/>
    <property type="status" value="ALT_INIT"/>
    <property type="molecule type" value="Genomic_DNA"/>
</dbReference>
<dbReference type="RefSeq" id="WP_041704763.1">
    <property type="nucleotide sequence ID" value="NC_008260.1"/>
</dbReference>
<dbReference type="SMR" id="Q0VSN8"/>
<dbReference type="STRING" id="393595.ABO_0362"/>
<dbReference type="KEGG" id="abo:ABO_0362"/>
<dbReference type="eggNOG" id="COG0316">
    <property type="taxonomic scope" value="Bacteria"/>
</dbReference>
<dbReference type="HOGENOM" id="CLU_069054_5_3_6"/>
<dbReference type="Proteomes" id="UP000008871">
    <property type="component" value="Chromosome"/>
</dbReference>
<dbReference type="GO" id="GO:0051537">
    <property type="term" value="F:2 iron, 2 sulfur cluster binding"/>
    <property type="evidence" value="ECO:0007669"/>
    <property type="project" value="TreeGrafter"/>
</dbReference>
<dbReference type="GO" id="GO:0051539">
    <property type="term" value="F:4 iron, 4 sulfur cluster binding"/>
    <property type="evidence" value="ECO:0007669"/>
    <property type="project" value="TreeGrafter"/>
</dbReference>
<dbReference type="GO" id="GO:0005506">
    <property type="term" value="F:iron ion binding"/>
    <property type="evidence" value="ECO:0007669"/>
    <property type="project" value="UniProtKB-UniRule"/>
</dbReference>
<dbReference type="GO" id="GO:0016226">
    <property type="term" value="P:iron-sulfur cluster assembly"/>
    <property type="evidence" value="ECO:0007669"/>
    <property type="project" value="UniProtKB-UniRule"/>
</dbReference>
<dbReference type="FunFam" id="2.60.300.12:FF:000002">
    <property type="entry name" value="Iron-sulfur cluster insertion protein ErpA"/>
    <property type="match status" value="1"/>
</dbReference>
<dbReference type="Gene3D" id="2.60.300.12">
    <property type="entry name" value="HesB-like domain"/>
    <property type="match status" value="1"/>
</dbReference>
<dbReference type="HAMAP" id="MF_01380">
    <property type="entry name" value="Fe_S_insert_ErpA"/>
    <property type="match status" value="1"/>
</dbReference>
<dbReference type="InterPro" id="IPR000361">
    <property type="entry name" value="FeS_biogenesis"/>
</dbReference>
<dbReference type="InterPro" id="IPR016092">
    <property type="entry name" value="FeS_cluster_insertion"/>
</dbReference>
<dbReference type="InterPro" id="IPR017870">
    <property type="entry name" value="FeS_cluster_insertion_CS"/>
</dbReference>
<dbReference type="InterPro" id="IPR023063">
    <property type="entry name" value="FeS_cluster_insertion_RrpA"/>
</dbReference>
<dbReference type="InterPro" id="IPR035903">
    <property type="entry name" value="HesB-like_dom_sf"/>
</dbReference>
<dbReference type="NCBIfam" id="TIGR00049">
    <property type="entry name" value="iron-sulfur cluster assembly accessory protein"/>
    <property type="match status" value="1"/>
</dbReference>
<dbReference type="NCBIfam" id="NF010147">
    <property type="entry name" value="PRK13623.1"/>
    <property type="match status" value="1"/>
</dbReference>
<dbReference type="PANTHER" id="PTHR43011">
    <property type="entry name" value="IRON-SULFUR CLUSTER ASSEMBLY 2 HOMOLOG, MITOCHONDRIAL"/>
    <property type="match status" value="1"/>
</dbReference>
<dbReference type="PANTHER" id="PTHR43011:SF1">
    <property type="entry name" value="IRON-SULFUR CLUSTER ASSEMBLY 2 HOMOLOG, MITOCHONDRIAL"/>
    <property type="match status" value="1"/>
</dbReference>
<dbReference type="Pfam" id="PF01521">
    <property type="entry name" value="Fe-S_biosyn"/>
    <property type="match status" value="1"/>
</dbReference>
<dbReference type="SUPFAM" id="SSF89360">
    <property type="entry name" value="HesB-like domain"/>
    <property type="match status" value="1"/>
</dbReference>
<dbReference type="PROSITE" id="PS01152">
    <property type="entry name" value="HESB"/>
    <property type="match status" value="1"/>
</dbReference>
<feature type="chain" id="PRO_0000311442" description="Iron-sulfur cluster insertion protein ErpA">
    <location>
        <begin position="1"/>
        <end position="119"/>
    </location>
</feature>
<feature type="binding site" evidence="1">
    <location>
        <position position="47"/>
    </location>
    <ligand>
        <name>iron-sulfur cluster</name>
        <dbReference type="ChEBI" id="CHEBI:30408"/>
    </ligand>
</feature>
<feature type="binding site" evidence="1">
    <location>
        <position position="111"/>
    </location>
    <ligand>
        <name>iron-sulfur cluster</name>
        <dbReference type="ChEBI" id="CHEBI:30408"/>
    </ligand>
</feature>
<feature type="binding site" evidence="1">
    <location>
        <position position="113"/>
    </location>
    <ligand>
        <name>iron-sulfur cluster</name>
        <dbReference type="ChEBI" id="CHEBI:30408"/>
    </ligand>
</feature>
<evidence type="ECO:0000255" key="1">
    <source>
        <dbReference type="HAMAP-Rule" id="MF_01380"/>
    </source>
</evidence>
<evidence type="ECO:0000305" key="2"/>
<name>ERPA_ALCBS</name>
<sequence>MSADSESMIESAPISFTDAAAAKVKELRDDEGNPNLKLRVYITGGGCAGFSYGFTFDETVNEDDTSVEKEGVILLVDAMSIQYLDGSVVDYEKGLMGSRFVVSNPNAATTCGCGSSFSV</sequence>
<gene>
    <name evidence="1" type="primary">erpA</name>
    <name type="ordered locus">ABO_0362</name>
</gene>
<comment type="function">
    <text evidence="1">Required for insertion of 4Fe-4S clusters for at least IspG.</text>
</comment>
<comment type="cofactor">
    <cofactor evidence="1">
        <name>iron-sulfur cluster</name>
        <dbReference type="ChEBI" id="CHEBI:30408"/>
    </cofactor>
    <text evidence="1">Binds 1 iron-sulfur cluster per subunit.</text>
</comment>
<comment type="subunit">
    <text evidence="1">Homodimer.</text>
</comment>
<comment type="similarity">
    <text evidence="1">Belongs to the HesB/IscA family.</text>
</comment>
<comment type="sequence caution" evidence="2">
    <conflict type="erroneous initiation">
        <sequence resource="EMBL-CDS" id="CAL15810"/>
    </conflict>
</comment>
<reference key="1">
    <citation type="journal article" date="2006" name="Nat. Biotechnol.">
        <title>Genome sequence of the ubiquitous hydrocarbon-degrading marine bacterium Alcanivorax borkumensis.</title>
        <authorList>
            <person name="Schneiker S."/>
            <person name="Martins dos Santos V.A.P."/>
            <person name="Bartels D."/>
            <person name="Bekel T."/>
            <person name="Brecht M."/>
            <person name="Buhrmester J."/>
            <person name="Chernikova T.N."/>
            <person name="Denaro R."/>
            <person name="Ferrer M."/>
            <person name="Gertler C."/>
            <person name="Goesmann A."/>
            <person name="Golyshina O.V."/>
            <person name="Kaminski F."/>
            <person name="Khachane A.N."/>
            <person name="Lang S."/>
            <person name="Linke B."/>
            <person name="McHardy A.C."/>
            <person name="Meyer F."/>
            <person name="Nechitaylo T."/>
            <person name="Puehler A."/>
            <person name="Regenhardt D."/>
            <person name="Rupp O."/>
            <person name="Sabirova J.S."/>
            <person name="Selbitschka W."/>
            <person name="Yakimov M.M."/>
            <person name="Timmis K.N."/>
            <person name="Vorhoelter F.-J."/>
            <person name="Weidner S."/>
            <person name="Kaiser O."/>
            <person name="Golyshin P.N."/>
        </authorList>
    </citation>
    <scope>NUCLEOTIDE SEQUENCE [LARGE SCALE GENOMIC DNA]</scope>
    <source>
        <strain>ATCC 700651 / DSM 11573 / NCIMB 13689 / SK2</strain>
    </source>
</reference>